<comment type="function">
    <text evidence="6">Hydrophilin which is essential to overcome the simple stress of the desiccation-rehydration process.</text>
</comment>
<comment type="subcellular location">
    <subcellularLocation>
        <location evidence="3 7">Secreted</location>
        <location evidence="3 7">Cell wall</location>
    </subcellularLocation>
    <subcellularLocation>
        <location evidence="8">Membrane</location>
        <topology evidence="8">Lipid-anchor</topology>
        <topology evidence="8">GPI-anchor</topology>
    </subcellularLocation>
</comment>
<comment type="induction">
    <text evidence="4 6">Up-regulated in response to osmotic stress.</text>
</comment>
<comment type="PTM">
    <text>The GPI-anchor is attached to the protein in the endoplasmic reticulum and serves to target the protein to the cell surface. There, the glucosamine-inositol phospholipid moiety is cleaved off and the GPI-modified mannoprotein is covalently attached via its lipidless GPI glycan remnant to the 1,6-beta-glucan of the outer cell wall layer.</text>
</comment>
<comment type="disruption phenotype">
    <text evidence="6">Has statistically significant lower desiccation tolerance capacity.</text>
</comment>
<comment type="miscellaneous">
    <text evidence="5">Present with 1380 molecules/cell in log phase SD medium.</text>
</comment>
<comment type="similarity">
    <text evidence="8">Belongs to the PGA14 family.</text>
</comment>
<dbReference type="EMBL" id="Z71466">
    <property type="protein sequence ID" value="CAA96084.1"/>
    <property type="molecule type" value="Genomic_DNA"/>
</dbReference>
<dbReference type="EMBL" id="BK006947">
    <property type="protein sequence ID" value="DAA10363.1"/>
    <property type="molecule type" value="Genomic_DNA"/>
</dbReference>
<dbReference type="PIR" id="S63145">
    <property type="entry name" value="S63145"/>
</dbReference>
<dbReference type="RefSeq" id="NP_014209.1">
    <property type="nucleotide sequence ID" value="NM_001183028.1"/>
</dbReference>
<dbReference type="BioGRID" id="35643">
    <property type="interactions" value="95"/>
</dbReference>
<dbReference type="DIP" id="DIP-4739N"/>
<dbReference type="FunCoup" id="P53872">
    <property type="interactions" value="47"/>
</dbReference>
<dbReference type="IntAct" id="P53872">
    <property type="interactions" value="10"/>
</dbReference>
<dbReference type="MINT" id="P53872"/>
<dbReference type="STRING" id="4932.YNL190W"/>
<dbReference type="GlyGen" id="P53872">
    <property type="glycosylation" value="11 sites"/>
</dbReference>
<dbReference type="PaxDb" id="4932-YNL190W"/>
<dbReference type="PeptideAtlas" id="P53872"/>
<dbReference type="EnsemblFungi" id="YNL190W_mRNA">
    <property type="protein sequence ID" value="YNL190W"/>
    <property type="gene ID" value="YNL190W"/>
</dbReference>
<dbReference type="GeneID" id="855531"/>
<dbReference type="KEGG" id="sce:YNL190W"/>
<dbReference type="AGR" id="SGD:S000005134"/>
<dbReference type="SGD" id="S000005134">
    <property type="gene designation" value="YNL190W"/>
</dbReference>
<dbReference type="VEuPathDB" id="FungiDB:YNL190W"/>
<dbReference type="eggNOG" id="ENOG502RZ9P">
    <property type="taxonomic scope" value="Eukaryota"/>
</dbReference>
<dbReference type="HOGENOM" id="CLU_098355_0_0_1"/>
<dbReference type="InParanoid" id="P53872"/>
<dbReference type="OMA" id="WGRFDHT"/>
<dbReference type="OrthoDB" id="4094978at2759"/>
<dbReference type="BioCyc" id="YEAST:G3O-33201-MONOMER"/>
<dbReference type="BioGRID-ORCS" id="855531">
    <property type="hits" value="0 hits in 10 CRISPR screens"/>
</dbReference>
<dbReference type="PRO" id="PR:P53872"/>
<dbReference type="Proteomes" id="UP000002311">
    <property type="component" value="Chromosome XIV"/>
</dbReference>
<dbReference type="RNAct" id="P53872">
    <property type="molecule type" value="protein"/>
</dbReference>
<dbReference type="GO" id="GO:0005576">
    <property type="term" value="C:extracellular region"/>
    <property type="evidence" value="ECO:0007669"/>
    <property type="project" value="UniProtKB-KW"/>
</dbReference>
<dbReference type="GO" id="GO:0009277">
    <property type="term" value="C:fungal-type cell wall"/>
    <property type="evidence" value="ECO:0000314"/>
    <property type="project" value="SGD"/>
</dbReference>
<dbReference type="GO" id="GO:0098552">
    <property type="term" value="C:side of membrane"/>
    <property type="evidence" value="ECO:0007669"/>
    <property type="project" value="UniProtKB-KW"/>
</dbReference>
<dbReference type="GO" id="GO:0042631">
    <property type="term" value="P:cellular response to water deprivation"/>
    <property type="evidence" value="ECO:0000315"/>
    <property type="project" value="SGD"/>
</dbReference>
<keyword id="KW-0134">Cell wall</keyword>
<keyword id="KW-0325">Glycoprotein</keyword>
<keyword id="KW-0336">GPI-anchor</keyword>
<keyword id="KW-0449">Lipoprotein</keyword>
<keyword id="KW-0472">Membrane</keyword>
<keyword id="KW-1185">Reference proteome</keyword>
<keyword id="KW-0677">Repeat</keyword>
<keyword id="KW-0964">Secreted</keyword>
<keyword id="KW-0732">Signal</keyword>
<keyword id="KW-0346">Stress response</keyword>
<feature type="signal peptide" evidence="1">
    <location>
        <begin position="1"/>
        <end position="20"/>
    </location>
</feature>
<feature type="chain" id="PRO_0000203402" description="Hydrophilin YNL190W">
    <location>
        <begin position="21"/>
        <end position="174"/>
    </location>
</feature>
<feature type="propeptide" id="PRO_0000424804" description="Removed in mature form">
    <location>
        <begin position="175"/>
        <end position="204"/>
    </location>
</feature>
<feature type="region of interest" description="Disordered" evidence="2">
    <location>
        <begin position="35"/>
        <end position="179"/>
    </location>
</feature>
<feature type="compositionally biased region" description="Low complexity" evidence="2">
    <location>
        <begin position="35"/>
        <end position="46"/>
    </location>
</feature>
<feature type="compositionally biased region" description="Basic residues" evidence="2">
    <location>
        <begin position="47"/>
        <end position="59"/>
    </location>
</feature>
<feature type="compositionally biased region" description="Basic residues" evidence="2">
    <location>
        <begin position="67"/>
        <end position="79"/>
    </location>
</feature>
<feature type="compositionally biased region" description="Basic residues" evidence="2">
    <location>
        <begin position="87"/>
        <end position="99"/>
    </location>
</feature>
<feature type="compositionally biased region" description="Basic residues" evidence="2">
    <location>
        <begin position="107"/>
        <end position="119"/>
    </location>
</feature>
<feature type="compositionally biased region" description="Basic residues" evidence="2">
    <location>
        <begin position="127"/>
        <end position="139"/>
    </location>
</feature>
<feature type="compositionally biased region" description="Basic residues" evidence="2">
    <location>
        <begin position="147"/>
        <end position="156"/>
    </location>
</feature>
<feature type="lipid moiety-binding region" description="GPI-anchor amidated asparagine" evidence="3">
    <location>
        <position position="174"/>
    </location>
</feature>
<feature type="glycosylation site" description="N-linked (GlcNAc...) asparagine" evidence="1">
    <location>
        <position position="55"/>
    </location>
</feature>
<feature type="glycosylation site" description="N-linked (GlcNAc...) asparagine" evidence="1">
    <location>
        <position position="64"/>
    </location>
</feature>
<feature type="glycosylation site" description="N-linked (GlcNAc...) asparagine" evidence="1">
    <location>
        <position position="75"/>
    </location>
</feature>
<feature type="glycosylation site" description="N-linked (GlcNAc...) asparagine" evidence="1">
    <location>
        <position position="84"/>
    </location>
</feature>
<feature type="glycosylation site" description="N-linked (GlcNAc...) asparagine" evidence="1">
    <location>
        <position position="95"/>
    </location>
</feature>
<feature type="glycosylation site" description="N-linked (GlcNAc...) asparagine" evidence="1">
    <location>
        <position position="104"/>
    </location>
</feature>
<feature type="glycosylation site" description="N-linked (GlcNAc...) asparagine" evidence="1">
    <location>
        <position position="115"/>
    </location>
</feature>
<feature type="glycosylation site" description="N-linked (GlcNAc...) asparagine" evidence="1">
    <location>
        <position position="124"/>
    </location>
</feature>
<feature type="glycosylation site" description="N-linked (GlcNAc...) asparagine" evidence="1">
    <location>
        <position position="135"/>
    </location>
</feature>
<feature type="glycosylation site" description="N-linked (GlcNAc...) asparagine" evidence="1">
    <location>
        <position position="144"/>
    </location>
</feature>
<feature type="glycosylation site" description="N-linked (GlcNAc...) asparagine" evidence="1">
    <location>
        <position position="155"/>
    </location>
</feature>
<accession>P53872</accession>
<accession>D6W0Z7</accession>
<sequence length="204" mass="21966">MKFSSVTAITLATVATVATAKKGEHDFTTTLTLSSDGSLTTTTSTHTTHKYGKFNKTSKSKTPNHTGTHKYGKFNKTSKSKTPNHTGTHKYGKFNKTSKSKTPNHTGTHKYGKFNKTSKSKTPNHTGTHKYGKFNKTSKSKTPNHTGTHKYGKFNKTKHDTTTYGPGEKARKNNAAPGPSNFNSIKLFGVTAGSAAVAGALLLL</sequence>
<reference key="1">
    <citation type="journal article" date="1997" name="Nature">
        <title>The nucleotide sequence of Saccharomyces cerevisiae chromosome XIV and its evolutionary implications.</title>
        <authorList>
            <person name="Philippsen P."/>
            <person name="Kleine K."/>
            <person name="Poehlmann R."/>
            <person name="Duesterhoeft A."/>
            <person name="Hamberg K."/>
            <person name="Hegemann J.H."/>
            <person name="Obermaier B."/>
            <person name="Urrestarazu L.A."/>
            <person name="Aert R."/>
            <person name="Albermann K."/>
            <person name="Altmann R."/>
            <person name="Andre B."/>
            <person name="Baladron V."/>
            <person name="Ballesta J.P.G."/>
            <person name="Becam A.-M."/>
            <person name="Beinhauer J.D."/>
            <person name="Boskovic J."/>
            <person name="Buitrago M.J."/>
            <person name="Bussereau F."/>
            <person name="Coster F."/>
            <person name="Crouzet M."/>
            <person name="D'Angelo M."/>
            <person name="Dal Pero F."/>
            <person name="De Antoni A."/>
            <person name="del Rey F."/>
            <person name="Doignon F."/>
            <person name="Domdey H."/>
            <person name="Dubois E."/>
            <person name="Fiedler T.A."/>
            <person name="Fleig U."/>
            <person name="Floeth M."/>
            <person name="Fritz C."/>
            <person name="Gaillardin C."/>
            <person name="Garcia-Cantalejo J.M."/>
            <person name="Glansdorff N."/>
            <person name="Goffeau A."/>
            <person name="Gueldener U."/>
            <person name="Herbert C.J."/>
            <person name="Heumann K."/>
            <person name="Heuss-Neitzel D."/>
            <person name="Hilbert H."/>
            <person name="Hinni K."/>
            <person name="Iraqui Houssaini I."/>
            <person name="Jacquet M."/>
            <person name="Jimenez A."/>
            <person name="Jonniaux J.-L."/>
            <person name="Karpfinger-Hartl L."/>
            <person name="Lanfranchi G."/>
            <person name="Lepingle A."/>
            <person name="Levesque H."/>
            <person name="Lyck R."/>
            <person name="Maftahi M."/>
            <person name="Mallet L."/>
            <person name="Maurer C.T.C."/>
            <person name="Messenguy F."/>
            <person name="Mewes H.-W."/>
            <person name="Moestl D."/>
            <person name="Nasr F."/>
            <person name="Nicaud J.-M."/>
            <person name="Niedenthal R.K."/>
            <person name="Pandolfo D."/>
            <person name="Pierard A."/>
            <person name="Piravandi E."/>
            <person name="Planta R.J."/>
            <person name="Pohl T.M."/>
            <person name="Purnelle B."/>
            <person name="Rebischung C."/>
            <person name="Remacha M.A."/>
            <person name="Revuelta J.L."/>
            <person name="Rinke M."/>
            <person name="Saiz J.E."/>
            <person name="Sartorello F."/>
            <person name="Scherens B."/>
            <person name="Sen-Gupta M."/>
            <person name="Soler-Mira A."/>
            <person name="Urbanus J.H.M."/>
            <person name="Valle G."/>
            <person name="Van Dyck L."/>
            <person name="Verhasselt P."/>
            <person name="Vierendeels F."/>
            <person name="Vissers S."/>
            <person name="Voet M."/>
            <person name="Volckaert G."/>
            <person name="Wach A."/>
            <person name="Wambutt R."/>
            <person name="Wedler H."/>
            <person name="Zollner A."/>
            <person name="Hani J."/>
        </authorList>
    </citation>
    <scope>NUCLEOTIDE SEQUENCE [LARGE SCALE GENOMIC DNA]</scope>
    <source>
        <strain>ATCC 204508 / S288c</strain>
    </source>
</reference>
<reference key="2">
    <citation type="journal article" date="2014" name="G3 (Bethesda)">
        <title>The reference genome sequence of Saccharomyces cerevisiae: Then and now.</title>
        <authorList>
            <person name="Engel S.R."/>
            <person name="Dietrich F.S."/>
            <person name="Fisk D.G."/>
            <person name="Binkley G."/>
            <person name="Balakrishnan R."/>
            <person name="Costanzo M.C."/>
            <person name="Dwight S.S."/>
            <person name="Hitz B.C."/>
            <person name="Karra K."/>
            <person name="Nash R.S."/>
            <person name="Weng S."/>
            <person name="Wong E.D."/>
            <person name="Lloyd P."/>
            <person name="Skrzypek M.S."/>
            <person name="Miyasato S.R."/>
            <person name="Simison M."/>
            <person name="Cherry J.M."/>
        </authorList>
    </citation>
    <scope>GENOME REANNOTATION</scope>
    <source>
        <strain>ATCC 204508 / S288c</strain>
    </source>
</reference>
<reference key="3">
    <citation type="journal article" date="1998" name="Mol. Gen. Genet.">
        <title>Screening for glycosylphosphatidylinositol (GPI)-dependent cell wall proteins in Saccharomyces cerevisiae.</title>
        <authorList>
            <person name="Hamada K."/>
            <person name="Fukuchi S."/>
            <person name="Arisawa M."/>
            <person name="Baba M."/>
            <person name="Kitada K."/>
        </authorList>
    </citation>
    <scope>SUBCELLULAR LOCATION</scope>
</reference>
<reference key="4">
    <citation type="journal article" date="1999" name="J. Bacteriol.">
        <title>Amino acid residues in the omega-minus region participate in cellular localization of yeast glycosylphosphatidylinositol-attached proteins.</title>
        <authorList>
            <person name="Hamada K."/>
            <person name="Terashima H."/>
            <person name="Arisawa M."/>
            <person name="Yabuki N."/>
            <person name="Kitada K."/>
        </authorList>
    </citation>
    <scope>GPI-ANCHOR AT ASN-174</scope>
    <scope>SUBCELLULAR LOCATION</scope>
</reference>
<reference key="5">
    <citation type="journal article" date="2000" name="J. Biol. Chem.">
        <title>Highly hydrophilic proteins in prokaryotes and eukaryotes are common during conditions of water deficit.</title>
        <authorList>
            <person name="Garay-Arroyo A."/>
            <person name="Colmenero-Flores J.M."/>
            <person name="Garciarrubio A."/>
            <person name="Covarrubias A.A."/>
        </authorList>
    </citation>
    <scope>INDUCTION</scope>
</reference>
<reference key="6">
    <citation type="journal article" date="2003" name="Nature">
        <title>Global analysis of protein expression in yeast.</title>
        <authorList>
            <person name="Ghaemmaghami S."/>
            <person name="Huh W.-K."/>
            <person name="Bower K."/>
            <person name="Howson R.W."/>
            <person name="Belle A."/>
            <person name="Dephoure N."/>
            <person name="O'Shea E.K."/>
            <person name="Weissman J.S."/>
        </authorList>
    </citation>
    <scope>LEVEL OF PROTEIN EXPRESSION [LARGE SCALE ANALYSIS]</scope>
</reference>
<reference key="7">
    <citation type="journal article" date="2012" name="PLoS ONE">
        <title>The STF2p hydrophilin from Saccharomyces cerevisiae is required for dehydration stress tolerance.</title>
        <authorList>
            <person name="Lopez-Martinez G."/>
            <person name="Rodriguez-Porrata B."/>
            <person name="Margalef-Catala M."/>
            <person name="Cordero-Otero R."/>
        </authorList>
    </citation>
    <scope>DISRUPTION PHENOTYPE</scope>
    <scope>FUNCTION</scope>
    <scope>INDUCTION</scope>
</reference>
<name>PGA14_YEAST</name>
<evidence type="ECO:0000255" key="1"/>
<evidence type="ECO:0000256" key="2">
    <source>
        <dbReference type="SAM" id="MobiDB-lite"/>
    </source>
</evidence>
<evidence type="ECO:0000269" key="3">
    <source>
    </source>
</evidence>
<evidence type="ECO:0000269" key="4">
    <source>
    </source>
</evidence>
<evidence type="ECO:0000269" key="5">
    <source>
    </source>
</evidence>
<evidence type="ECO:0000269" key="6">
    <source>
    </source>
</evidence>
<evidence type="ECO:0000269" key="7">
    <source>
    </source>
</evidence>
<evidence type="ECO:0000305" key="8"/>
<proteinExistence type="evidence at protein level"/>
<gene>
    <name type="ordered locus">YNL190W</name>
    <name type="ORF">N1415</name>
</gene>
<protein>
    <recommendedName>
        <fullName>Hydrophilin YNL190W</fullName>
    </recommendedName>
</protein>
<organism>
    <name type="scientific">Saccharomyces cerevisiae (strain ATCC 204508 / S288c)</name>
    <name type="common">Baker's yeast</name>
    <dbReference type="NCBI Taxonomy" id="559292"/>
    <lineage>
        <taxon>Eukaryota</taxon>
        <taxon>Fungi</taxon>
        <taxon>Dikarya</taxon>
        <taxon>Ascomycota</taxon>
        <taxon>Saccharomycotina</taxon>
        <taxon>Saccharomycetes</taxon>
        <taxon>Saccharomycetales</taxon>
        <taxon>Saccharomycetaceae</taxon>
        <taxon>Saccharomyces</taxon>
    </lineage>
</organism>